<evidence type="ECO:0000255" key="1">
    <source>
        <dbReference type="HAMAP-Rule" id="MF_00301"/>
    </source>
</evidence>
<dbReference type="EC" id="2.7.1.39" evidence="1"/>
<dbReference type="EMBL" id="CP000615">
    <property type="protein sequence ID" value="ABO57223.1"/>
    <property type="molecule type" value="Genomic_DNA"/>
</dbReference>
<dbReference type="SMR" id="A4JLS0"/>
<dbReference type="KEGG" id="bvi:Bcep1808_4243"/>
<dbReference type="eggNOG" id="COG2334">
    <property type="taxonomic scope" value="Bacteria"/>
</dbReference>
<dbReference type="HOGENOM" id="CLU_053300_0_0_4"/>
<dbReference type="UniPathway" id="UPA00050">
    <property type="reaction ID" value="UER00064"/>
</dbReference>
<dbReference type="Proteomes" id="UP000002287">
    <property type="component" value="Chromosome 2"/>
</dbReference>
<dbReference type="GO" id="GO:0005524">
    <property type="term" value="F:ATP binding"/>
    <property type="evidence" value="ECO:0007669"/>
    <property type="project" value="UniProtKB-KW"/>
</dbReference>
<dbReference type="GO" id="GO:0004413">
    <property type="term" value="F:homoserine kinase activity"/>
    <property type="evidence" value="ECO:0007669"/>
    <property type="project" value="UniProtKB-UniRule"/>
</dbReference>
<dbReference type="GO" id="GO:0009088">
    <property type="term" value="P:threonine biosynthetic process"/>
    <property type="evidence" value="ECO:0007669"/>
    <property type="project" value="UniProtKB-UniRule"/>
</dbReference>
<dbReference type="CDD" id="cd05153">
    <property type="entry name" value="HomoserineK_II"/>
    <property type="match status" value="1"/>
</dbReference>
<dbReference type="Gene3D" id="3.90.1200.10">
    <property type="match status" value="1"/>
</dbReference>
<dbReference type="Gene3D" id="3.30.200.20">
    <property type="entry name" value="Phosphorylase Kinase, domain 1"/>
    <property type="match status" value="1"/>
</dbReference>
<dbReference type="HAMAP" id="MF_00301">
    <property type="entry name" value="Homoser_kinase_2"/>
    <property type="match status" value="1"/>
</dbReference>
<dbReference type="InterPro" id="IPR002575">
    <property type="entry name" value="Aminoglycoside_PTrfase"/>
</dbReference>
<dbReference type="InterPro" id="IPR005280">
    <property type="entry name" value="Homoserine_kinase_II"/>
</dbReference>
<dbReference type="InterPro" id="IPR011009">
    <property type="entry name" value="Kinase-like_dom_sf"/>
</dbReference>
<dbReference type="InterPro" id="IPR050249">
    <property type="entry name" value="Pseudomonas-type_ThrB"/>
</dbReference>
<dbReference type="NCBIfam" id="NF003558">
    <property type="entry name" value="PRK05231.1"/>
    <property type="match status" value="1"/>
</dbReference>
<dbReference type="NCBIfam" id="TIGR00938">
    <property type="entry name" value="thrB_alt"/>
    <property type="match status" value="1"/>
</dbReference>
<dbReference type="PANTHER" id="PTHR21064:SF6">
    <property type="entry name" value="AMINOGLYCOSIDE PHOSPHOTRANSFERASE DOMAIN-CONTAINING PROTEIN"/>
    <property type="match status" value="1"/>
</dbReference>
<dbReference type="PANTHER" id="PTHR21064">
    <property type="entry name" value="AMINOGLYCOSIDE PHOSPHOTRANSFERASE DOMAIN-CONTAINING PROTEIN-RELATED"/>
    <property type="match status" value="1"/>
</dbReference>
<dbReference type="Pfam" id="PF01636">
    <property type="entry name" value="APH"/>
    <property type="match status" value="1"/>
</dbReference>
<dbReference type="SUPFAM" id="SSF56112">
    <property type="entry name" value="Protein kinase-like (PK-like)"/>
    <property type="match status" value="1"/>
</dbReference>
<reference key="1">
    <citation type="submission" date="2007-03" db="EMBL/GenBank/DDBJ databases">
        <title>Complete sequence of chromosome 2 of Burkholderia vietnamiensis G4.</title>
        <authorList>
            <consortium name="US DOE Joint Genome Institute"/>
            <person name="Copeland A."/>
            <person name="Lucas S."/>
            <person name="Lapidus A."/>
            <person name="Barry K."/>
            <person name="Detter J.C."/>
            <person name="Glavina del Rio T."/>
            <person name="Hammon N."/>
            <person name="Israni S."/>
            <person name="Dalin E."/>
            <person name="Tice H."/>
            <person name="Pitluck S."/>
            <person name="Chain P."/>
            <person name="Malfatti S."/>
            <person name="Shin M."/>
            <person name="Vergez L."/>
            <person name="Schmutz J."/>
            <person name="Larimer F."/>
            <person name="Land M."/>
            <person name="Hauser L."/>
            <person name="Kyrpides N."/>
            <person name="Tiedje J."/>
            <person name="Richardson P."/>
        </authorList>
    </citation>
    <scope>NUCLEOTIDE SEQUENCE [LARGE SCALE GENOMIC DNA]</scope>
    <source>
        <strain>G4 / LMG 22486</strain>
    </source>
</reference>
<gene>
    <name evidence="1" type="primary">thrB</name>
    <name type="ordered locus">Bcep1808_4243</name>
</gene>
<organism>
    <name type="scientific">Burkholderia vietnamiensis (strain G4 / LMG 22486)</name>
    <name type="common">Burkholderia cepacia (strain R1808)</name>
    <dbReference type="NCBI Taxonomy" id="269482"/>
    <lineage>
        <taxon>Bacteria</taxon>
        <taxon>Pseudomonadati</taxon>
        <taxon>Pseudomonadota</taxon>
        <taxon>Betaproteobacteria</taxon>
        <taxon>Burkholderiales</taxon>
        <taxon>Burkholderiaceae</taxon>
        <taxon>Burkholderia</taxon>
        <taxon>Burkholderia cepacia complex</taxon>
    </lineage>
</organism>
<sequence>MAVFTAVSDSDLAQWMRHYELGDVLAFRGIPSGIENSNFFLTTTRGEYVLTIFEKLTAEQLPFYLDLMRHLASHRVPVPDPVPRDDGALFGLLHGKPAAIVTKLDGAAELAPGVEHCIEVGQMLARMHLAGRDYARQQPNLRSLPWWQENVPAIVPFISDAQRALLESELAHQAAFFASDDYAALPSGPCHCDLFRDNVLFAHAAPGTGHDVRLGGFFDFYFAGCDKWLFDVAVTVNDWCVDLATGVLDTARADALLRAYQTVRPFTAEERRHWSDMLRAGAYRFWVSRLYDFYLPRAAEMLKPHDPGHFERILRERIAHTPALPETHTACN</sequence>
<comment type="catalytic activity">
    <reaction evidence="1">
        <text>L-homoserine + ATP = O-phospho-L-homoserine + ADP + H(+)</text>
        <dbReference type="Rhea" id="RHEA:13985"/>
        <dbReference type="ChEBI" id="CHEBI:15378"/>
        <dbReference type="ChEBI" id="CHEBI:30616"/>
        <dbReference type="ChEBI" id="CHEBI:57476"/>
        <dbReference type="ChEBI" id="CHEBI:57590"/>
        <dbReference type="ChEBI" id="CHEBI:456216"/>
        <dbReference type="EC" id="2.7.1.39"/>
    </reaction>
</comment>
<comment type="pathway">
    <text evidence="1">Amino-acid biosynthesis; L-threonine biosynthesis; L-threonine from L-aspartate: step 4/5.</text>
</comment>
<comment type="similarity">
    <text evidence="1">Belongs to the pseudomonas-type ThrB family.</text>
</comment>
<proteinExistence type="inferred from homology"/>
<protein>
    <recommendedName>
        <fullName evidence="1">Homoserine kinase</fullName>
        <shortName evidence="1">HK</shortName>
        <shortName evidence="1">HSK</shortName>
        <ecNumber evidence="1">2.7.1.39</ecNumber>
    </recommendedName>
</protein>
<name>KHSE_BURVG</name>
<accession>A4JLS0</accession>
<keyword id="KW-0028">Amino-acid biosynthesis</keyword>
<keyword id="KW-0067">ATP-binding</keyword>
<keyword id="KW-0418">Kinase</keyword>
<keyword id="KW-0547">Nucleotide-binding</keyword>
<keyword id="KW-0791">Threonine biosynthesis</keyword>
<keyword id="KW-0808">Transferase</keyword>
<feature type="chain" id="PRO_1000022580" description="Homoserine kinase">
    <location>
        <begin position="1"/>
        <end position="332"/>
    </location>
</feature>